<dbReference type="EMBL" id="CP000918">
    <property type="protein sequence ID" value="ACO16471.1"/>
    <property type="molecule type" value="Genomic_DNA"/>
</dbReference>
<dbReference type="RefSeq" id="WP_000024543.1">
    <property type="nucleotide sequence ID" value="NC_012468.1"/>
</dbReference>
<dbReference type="SMR" id="C1CAL3"/>
<dbReference type="GeneID" id="45652308"/>
<dbReference type="KEGG" id="snm:SP70585_0266"/>
<dbReference type="HOGENOM" id="CLU_041575_5_2_9"/>
<dbReference type="Proteomes" id="UP000002211">
    <property type="component" value="Chromosome"/>
</dbReference>
<dbReference type="GO" id="GO:1990904">
    <property type="term" value="C:ribonucleoprotein complex"/>
    <property type="evidence" value="ECO:0007669"/>
    <property type="project" value="UniProtKB-KW"/>
</dbReference>
<dbReference type="GO" id="GO:0005840">
    <property type="term" value="C:ribosome"/>
    <property type="evidence" value="ECO:0007669"/>
    <property type="project" value="UniProtKB-KW"/>
</dbReference>
<dbReference type="GO" id="GO:0019843">
    <property type="term" value="F:rRNA binding"/>
    <property type="evidence" value="ECO:0007669"/>
    <property type="project" value="UniProtKB-UniRule"/>
</dbReference>
<dbReference type="GO" id="GO:0003735">
    <property type="term" value="F:structural constituent of ribosome"/>
    <property type="evidence" value="ECO:0007669"/>
    <property type="project" value="InterPro"/>
</dbReference>
<dbReference type="GO" id="GO:0006412">
    <property type="term" value="P:translation"/>
    <property type="evidence" value="ECO:0007669"/>
    <property type="project" value="UniProtKB-UniRule"/>
</dbReference>
<dbReference type="FunFam" id="3.40.1370.10:FF:000003">
    <property type="entry name" value="50S ribosomal protein L4"/>
    <property type="match status" value="1"/>
</dbReference>
<dbReference type="Gene3D" id="3.40.1370.10">
    <property type="match status" value="1"/>
</dbReference>
<dbReference type="HAMAP" id="MF_01328_B">
    <property type="entry name" value="Ribosomal_uL4_B"/>
    <property type="match status" value="1"/>
</dbReference>
<dbReference type="InterPro" id="IPR002136">
    <property type="entry name" value="Ribosomal_uL4"/>
</dbReference>
<dbReference type="InterPro" id="IPR013005">
    <property type="entry name" value="Ribosomal_uL4-like"/>
</dbReference>
<dbReference type="InterPro" id="IPR023574">
    <property type="entry name" value="Ribosomal_uL4_dom_sf"/>
</dbReference>
<dbReference type="NCBIfam" id="TIGR03953">
    <property type="entry name" value="rplD_bact"/>
    <property type="match status" value="1"/>
</dbReference>
<dbReference type="PANTHER" id="PTHR10746">
    <property type="entry name" value="50S RIBOSOMAL PROTEIN L4"/>
    <property type="match status" value="1"/>
</dbReference>
<dbReference type="PANTHER" id="PTHR10746:SF6">
    <property type="entry name" value="LARGE RIBOSOMAL SUBUNIT PROTEIN UL4M"/>
    <property type="match status" value="1"/>
</dbReference>
<dbReference type="Pfam" id="PF00573">
    <property type="entry name" value="Ribosomal_L4"/>
    <property type="match status" value="1"/>
</dbReference>
<dbReference type="SUPFAM" id="SSF52166">
    <property type="entry name" value="Ribosomal protein L4"/>
    <property type="match status" value="1"/>
</dbReference>
<reference key="1">
    <citation type="journal article" date="2010" name="Genome Biol.">
        <title>Structure and dynamics of the pan-genome of Streptococcus pneumoniae and closely related species.</title>
        <authorList>
            <person name="Donati C."/>
            <person name="Hiller N.L."/>
            <person name="Tettelin H."/>
            <person name="Muzzi A."/>
            <person name="Croucher N.J."/>
            <person name="Angiuoli S.V."/>
            <person name="Oggioni M."/>
            <person name="Dunning Hotopp J.C."/>
            <person name="Hu F.Z."/>
            <person name="Riley D.R."/>
            <person name="Covacci A."/>
            <person name="Mitchell T.J."/>
            <person name="Bentley S.D."/>
            <person name="Kilian M."/>
            <person name="Ehrlich G.D."/>
            <person name="Rappuoli R."/>
            <person name="Moxon E.R."/>
            <person name="Masignani V."/>
        </authorList>
    </citation>
    <scope>NUCLEOTIDE SEQUENCE [LARGE SCALE GENOMIC DNA]</scope>
    <source>
        <strain>70585</strain>
    </source>
</reference>
<feature type="chain" id="PRO_1000166026" description="Large ribosomal subunit protein uL4">
    <location>
        <begin position="1"/>
        <end position="207"/>
    </location>
</feature>
<feature type="region of interest" description="Disordered" evidence="2">
    <location>
        <begin position="49"/>
        <end position="78"/>
    </location>
</feature>
<comment type="function">
    <text evidence="1">One of the primary rRNA binding proteins, this protein initially binds near the 5'-end of the 23S rRNA. It is important during the early stages of 50S assembly. It makes multiple contacts with different domains of the 23S rRNA in the assembled 50S subunit and ribosome.</text>
</comment>
<comment type="function">
    <text evidence="1">Forms part of the polypeptide exit tunnel.</text>
</comment>
<comment type="subunit">
    <text evidence="1">Part of the 50S ribosomal subunit.</text>
</comment>
<comment type="similarity">
    <text evidence="1">Belongs to the universal ribosomal protein uL4 family.</text>
</comment>
<sequence length="207" mass="22109">MANVTLFDQTGKEAGQVVLSDAVFGIEPNESVVFDVIISQRASLRQGTHAVKNRSAVSGGGRKPWRQKGTGRARQGSIRSPQWRGGGVVFGPTPRSYGYKLPQKVRRLALKSVYSEKVAENKFVAVDALSFTAPKTAEFAKVLAALSIDSKVLVILEEGNEFAALSARNLPNVKVATATTASVLDIANSDKLLVTQAAISKIEEVLA</sequence>
<organism>
    <name type="scientific">Streptococcus pneumoniae (strain 70585)</name>
    <dbReference type="NCBI Taxonomy" id="488221"/>
    <lineage>
        <taxon>Bacteria</taxon>
        <taxon>Bacillati</taxon>
        <taxon>Bacillota</taxon>
        <taxon>Bacilli</taxon>
        <taxon>Lactobacillales</taxon>
        <taxon>Streptococcaceae</taxon>
        <taxon>Streptococcus</taxon>
    </lineage>
</organism>
<protein>
    <recommendedName>
        <fullName evidence="1">Large ribosomal subunit protein uL4</fullName>
    </recommendedName>
    <alternativeName>
        <fullName evidence="3">50S ribosomal protein L4</fullName>
    </alternativeName>
</protein>
<evidence type="ECO:0000255" key="1">
    <source>
        <dbReference type="HAMAP-Rule" id="MF_01328"/>
    </source>
</evidence>
<evidence type="ECO:0000256" key="2">
    <source>
        <dbReference type="SAM" id="MobiDB-lite"/>
    </source>
</evidence>
<evidence type="ECO:0000305" key="3"/>
<accession>C1CAL3</accession>
<proteinExistence type="inferred from homology"/>
<gene>
    <name evidence="1" type="primary">rplD</name>
    <name type="ordered locus">SP70585_0266</name>
</gene>
<keyword id="KW-0687">Ribonucleoprotein</keyword>
<keyword id="KW-0689">Ribosomal protein</keyword>
<keyword id="KW-0694">RNA-binding</keyword>
<keyword id="KW-0699">rRNA-binding</keyword>
<name>RL4_STRP7</name>